<sequence>MRFSIISASLVLIFANVKAFNEEEILEIFCGVPKKLVSRYNQCLIDHGPEIIKKNYEIINSCMKGHLGSETESAMEYVCNKKNVDISIKRCISDKISEEMKEFDRRARLEVWDVLYVCIFKA</sequence>
<proteinExistence type="evidence at transcript level"/>
<organism>
    <name type="scientific">Lychas mucronatus</name>
    <name type="common">Chinese swimming scorpion</name>
    <dbReference type="NCBI Taxonomy" id="172552"/>
    <lineage>
        <taxon>Eukaryota</taxon>
        <taxon>Metazoa</taxon>
        <taxon>Ecdysozoa</taxon>
        <taxon>Arthropoda</taxon>
        <taxon>Chelicerata</taxon>
        <taxon>Arachnida</taxon>
        <taxon>Scorpiones</taxon>
        <taxon>Buthida</taxon>
        <taxon>Buthoidea</taxon>
        <taxon>Buthidae</taxon>
        <taxon>Lychas</taxon>
    </lineage>
</organism>
<protein>
    <recommendedName>
        <fullName>Venom protein 7.1</fullName>
    </recommendedName>
</protein>
<dbReference type="EMBL" id="GT028606">
    <property type="status" value="NOT_ANNOTATED_CDS"/>
    <property type="molecule type" value="mRNA"/>
</dbReference>
<dbReference type="GO" id="GO:0005576">
    <property type="term" value="C:extracellular region"/>
    <property type="evidence" value="ECO:0007669"/>
    <property type="project" value="UniProtKB-SubCell"/>
</dbReference>
<keyword id="KW-1015">Disulfide bond</keyword>
<keyword id="KW-0964">Secreted</keyword>
<keyword id="KW-0732">Signal</keyword>
<reference key="1">
    <citation type="journal article" date="2010" name="BMC Genomics">
        <title>Comparative venom gland transcriptome analysis of the scorpion Lychas mucronatus reveals intraspecific toxic gene diversity and new venomous components.</title>
        <authorList>
            <person name="Zhao R."/>
            <person name="Ma Y."/>
            <person name="He Y."/>
            <person name="Di Z."/>
            <person name="Wu Y.-L."/>
            <person name="Cao Z.-J."/>
            <person name="Li W.-X."/>
        </authorList>
    </citation>
    <scope>NUCLEOTIDE SEQUENCE [MRNA]</scope>
    <source>
        <strain>Yunnan</strain>
        <tissue>Venom gland</tissue>
    </source>
</reference>
<accession>P0CJ03</accession>
<feature type="signal peptide" evidence="2">
    <location>
        <begin position="1"/>
        <end position="19"/>
    </location>
</feature>
<feature type="chain" id="PRO_0000403894" description="Venom protein 7.1">
    <location>
        <begin position="20"/>
        <end position="122"/>
    </location>
</feature>
<comment type="subcellular location">
    <subcellularLocation>
        <location evidence="1">Secreted</location>
    </subcellularLocation>
</comment>
<comment type="tissue specificity">
    <text evidence="3">Expressed by the venom gland.</text>
</comment>
<comment type="PTM">
    <text evidence="1">Contains 3 disulfide bonds.</text>
</comment>
<name>VP7_LYCMC</name>
<evidence type="ECO:0000250" key="1"/>
<evidence type="ECO:0000255" key="2"/>
<evidence type="ECO:0000305" key="3"/>